<accession>P0AEV4</accession>
<accession>P16427</accession>
<accession>Q2MAA4</accession>
<sequence>MTIWEISEKADYIAQRHRRLQDQWHIYCNSLVQGITLSKARLHHAMSCAPDKELCFVLFEHFRIYVTLADGFNSHTIEYYVETKDGEDKQRIAQAQLSIDGMIDGKVNIRDREQVLEHYLEKIAGVYDSLYTAIENNVPVNLSQLVKGQSPAA</sequence>
<name>HYCA_ECOLI</name>
<proteinExistence type="evidence at protein level"/>
<dbReference type="EMBL" id="X17506">
    <property type="protein sequence ID" value="CAA35546.1"/>
    <property type="molecule type" value="Genomic_DNA"/>
</dbReference>
<dbReference type="EMBL" id="U29579">
    <property type="protein sequence ID" value="AAA69235.1"/>
    <property type="molecule type" value="Genomic_DNA"/>
</dbReference>
<dbReference type="EMBL" id="U00096">
    <property type="protein sequence ID" value="AAC75767.1"/>
    <property type="molecule type" value="Genomic_DNA"/>
</dbReference>
<dbReference type="EMBL" id="AP009048">
    <property type="protein sequence ID" value="BAE76802.1"/>
    <property type="molecule type" value="Genomic_DNA"/>
</dbReference>
<dbReference type="PIR" id="S08619">
    <property type="entry name" value="S08619"/>
</dbReference>
<dbReference type="RefSeq" id="NP_417205.1">
    <property type="nucleotide sequence ID" value="NC_000913.3"/>
</dbReference>
<dbReference type="RefSeq" id="WP_000158056.1">
    <property type="nucleotide sequence ID" value="NZ_STEB01000027.1"/>
</dbReference>
<dbReference type="BioGRID" id="4262102">
    <property type="interactions" value="159"/>
</dbReference>
<dbReference type="BioGRID" id="851525">
    <property type="interactions" value="1"/>
</dbReference>
<dbReference type="FunCoup" id="P0AEV4">
    <property type="interactions" value="13"/>
</dbReference>
<dbReference type="IntAct" id="P0AEV4">
    <property type="interactions" value="1"/>
</dbReference>
<dbReference type="STRING" id="511145.b2725"/>
<dbReference type="PaxDb" id="511145-b2725"/>
<dbReference type="EnsemblBacteria" id="AAC75767">
    <property type="protein sequence ID" value="AAC75767"/>
    <property type="gene ID" value="b2725"/>
</dbReference>
<dbReference type="GeneID" id="93779283"/>
<dbReference type="GeneID" id="947193"/>
<dbReference type="KEGG" id="ecj:JW2695"/>
<dbReference type="KEGG" id="eco:b2725"/>
<dbReference type="KEGG" id="ecoc:C3026_14995"/>
<dbReference type="PATRIC" id="fig|1411691.4.peg.4016"/>
<dbReference type="EchoBASE" id="EB0469"/>
<dbReference type="eggNOG" id="ENOG50305VH">
    <property type="taxonomic scope" value="Bacteria"/>
</dbReference>
<dbReference type="HOGENOM" id="CLU_115336_0_0_6"/>
<dbReference type="InParanoid" id="P0AEV4"/>
<dbReference type="OMA" id="MTIWELS"/>
<dbReference type="OrthoDB" id="6412952at2"/>
<dbReference type="PhylomeDB" id="P0AEV4"/>
<dbReference type="BioCyc" id="EcoCyc:EG10474-MONOMER"/>
<dbReference type="PRO" id="PR:P0AEV4"/>
<dbReference type="Proteomes" id="UP000000625">
    <property type="component" value="Chromosome"/>
</dbReference>
<dbReference type="InterPro" id="IPR021285">
    <property type="entry name" value="Tscrpt_reg_HycA"/>
</dbReference>
<dbReference type="NCBIfam" id="NF007567">
    <property type="entry name" value="PRK10198.1"/>
    <property type="match status" value="1"/>
</dbReference>
<dbReference type="Pfam" id="PF11046">
    <property type="entry name" value="HycA_repressor"/>
    <property type="match status" value="1"/>
</dbReference>
<evidence type="ECO:0000269" key="1">
    <source>
    </source>
</evidence>
<evidence type="ECO:0000269" key="2">
    <source>
    </source>
</evidence>
<feature type="chain" id="PRO_0000084100" description="Formate hydrogenlyase regulatory protein HycA">
    <location>
        <begin position="1"/>
        <end position="153"/>
    </location>
</feature>
<gene>
    <name type="primary">hycA</name>
    <name type="synonym">hevA</name>
    <name type="ordered locus">b2725</name>
    <name type="ordered locus">JW2695</name>
</gene>
<reference key="1">
    <citation type="journal article" date="1990" name="Mol. Microbiol.">
        <title>Nucleotide sequence and expression of an operon in Escherichia coli coding for formate hydrogenlyase components.</title>
        <authorList>
            <person name="Boehm R."/>
            <person name="Sauter M."/>
            <person name="Boeck A."/>
        </authorList>
    </citation>
    <scope>NUCLEOTIDE SEQUENCE [GENOMIC DNA]</scope>
    <source>
        <strain>K12 / MC4100 / ATCC 35695 / DSM 6574</strain>
    </source>
</reference>
<reference key="2">
    <citation type="journal article" date="1997" name="Science">
        <title>The complete genome sequence of Escherichia coli K-12.</title>
        <authorList>
            <person name="Blattner F.R."/>
            <person name="Plunkett G. III"/>
            <person name="Bloch C.A."/>
            <person name="Perna N.T."/>
            <person name="Burland V."/>
            <person name="Riley M."/>
            <person name="Collado-Vides J."/>
            <person name="Glasner J.D."/>
            <person name="Rode C.K."/>
            <person name="Mayhew G.F."/>
            <person name="Gregor J."/>
            <person name="Davis N.W."/>
            <person name="Kirkpatrick H.A."/>
            <person name="Goeden M.A."/>
            <person name="Rose D.J."/>
            <person name="Mau B."/>
            <person name="Shao Y."/>
        </authorList>
    </citation>
    <scope>NUCLEOTIDE SEQUENCE [LARGE SCALE GENOMIC DNA]</scope>
    <source>
        <strain>K12 / MG1655 / ATCC 47076</strain>
    </source>
</reference>
<reference key="3">
    <citation type="journal article" date="2006" name="Mol. Syst. Biol.">
        <title>Highly accurate genome sequences of Escherichia coli K-12 strains MG1655 and W3110.</title>
        <authorList>
            <person name="Hayashi K."/>
            <person name="Morooka N."/>
            <person name="Yamamoto Y."/>
            <person name="Fujita K."/>
            <person name="Isono K."/>
            <person name="Choi S."/>
            <person name="Ohtsubo E."/>
            <person name="Baba T."/>
            <person name="Wanner B.L."/>
            <person name="Mori H."/>
            <person name="Horiuchi T."/>
        </authorList>
    </citation>
    <scope>NUCLEOTIDE SEQUENCE [LARGE SCALE GENOMIC DNA]</scope>
    <source>
        <strain>K12 / W3110 / ATCC 27325 / DSM 5911</strain>
    </source>
</reference>
<reference key="4">
    <citation type="journal article" date="1992" name="Mol. Microbiol.">
        <title>Mutational analysis of the operon (hyc) determining hydrogenase 3 formation in Escherichia coli.</title>
        <authorList>
            <person name="Sauter M."/>
            <person name="Boehm R."/>
            <person name="Boeck A."/>
        </authorList>
    </citation>
    <scope>FUNCTION</scope>
</reference>
<reference key="5">
    <citation type="journal article" date="1997" name="Electrophoresis">
        <title>Escherichia coli proteome analysis using the gene-protein database.</title>
        <authorList>
            <person name="VanBogelen R.A."/>
            <person name="Abshire K.Z."/>
            <person name="Moldover B."/>
            <person name="Olson E.R."/>
            <person name="Neidhardt F.C."/>
        </authorList>
    </citation>
    <scope>IDENTIFICATION BY 2D-GEL</scope>
</reference>
<reference key="6">
    <citation type="journal article" date="2002" name="J. Bacteriol.">
        <title>Regulation of the hydrogenase-4 operon of Escherichia coli by the sigma(54)-dependent transcriptional activators FhlA and HyfR.</title>
        <authorList>
            <person name="Skibinski D.A."/>
            <person name="Golby P."/>
            <person name="Chang Y.S."/>
            <person name="Sargent F."/>
            <person name="Hoffman R."/>
            <person name="Harper R."/>
            <person name="Guest J.R."/>
            <person name="Attwood M.M."/>
            <person name="Berks B.C."/>
            <person name="Andrews S.C."/>
        </authorList>
    </citation>
    <scope>FUNCTION</scope>
    <scope>REGULON</scope>
    <scope>DISRUPTION PHENOTYPE</scope>
    <source>
        <strain>K12 / MC4100 / ATCC 35695 / DSM 6574</strain>
    </source>
</reference>
<comment type="function">
    <text evidence="1 2">Regulatory protein for the formate hydrogenlyase system. Could act by directly interacting with FhlA or by preventing the binding of FhlA to the upstream activatory sequence (PubMed:1625581). Also down-regulates expression of the hyf operon (PubMed:12426353).</text>
</comment>
<comment type="disruption phenotype">
    <text evidence="1">Increased expression of the hyf operon (PubMed:12426353).</text>
</comment>
<protein>
    <recommendedName>
        <fullName>Formate hydrogenlyase regulatory protein HycA</fullName>
    </recommendedName>
</protein>
<organism>
    <name type="scientific">Escherichia coli (strain K12)</name>
    <dbReference type="NCBI Taxonomy" id="83333"/>
    <lineage>
        <taxon>Bacteria</taxon>
        <taxon>Pseudomonadati</taxon>
        <taxon>Pseudomonadota</taxon>
        <taxon>Gammaproteobacteria</taxon>
        <taxon>Enterobacterales</taxon>
        <taxon>Enterobacteriaceae</taxon>
        <taxon>Escherichia</taxon>
    </lineage>
</organism>
<keyword id="KW-1185">Reference proteome</keyword>
<keyword id="KW-0804">Transcription</keyword>
<keyword id="KW-0805">Transcription regulation</keyword>